<reference key="1">
    <citation type="journal article" date="2007" name="Environ. Microbiol.">
        <title>Whole-genome analysis of the ammonia-oxidizing bacterium, Nitrosomonas eutropha C91: implications for niche adaptation.</title>
        <authorList>
            <person name="Stein L.Y."/>
            <person name="Arp D.J."/>
            <person name="Berube P.M."/>
            <person name="Chain P.S."/>
            <person name="Hauser L."/>
            <person name="Jetten M.S."/>
            <person name="Klotz M.G."/>
            <person name="Larimer F.W."/>
            <person name="Norton J.M."/>
            <person name="Op den Camp H.J.M."/>
            <person name="Shin M."/>
            <person name="Wei X."/>
        </authorList>
    </citation>
    <scope>NUCLEOTIDE SEQUENCE [LARGE SCALE GENOMIC DNA]</scope>
    <source>
        <strain>DSM 101675 / C91 / Nm57</strain>
    </source>
</reference>
<feature type="chain" id="PRO_1000054827" description="Small ribosomal subunit protein uS15">
    <location>
        <begin position="1"/>
        <end position="89"/>
    </location>
</feature>
<comment type="function">
    <text evidence="1">One of the primary rRNA binding proteins, it binds directly to 16S rRNA where it helps nucleate assembly of the platform of the 30S subunit by binding and bridging several RNA helices of the 16S rRNA.</text>
</comment>
<comment type="function">
    <text evidence="1">Forms an intersubunit bridge (bridge B4) with the 23S rRNA of the 50S subunit in the ribosome.</text>
</comment>
<comment type="subunit">
    <text evidence="1">Part of the 30S ribosomal subunit. Forms a bridge to the 50S subunit in the 70S ribosome, contacting the 23S rRNA.</text>
</comment>
<comment type="similarity">
    <text evidence="1">Belongs to the universal ribosomal protein uS15 family.</text>
</comment>
<protein>
    <recommendedName>
        <fullName evidence="1">Small ribosomal subunit protein uS15</fullName>
    </recommendedName>
    <alternativeName>
        <fullName evidence="2">30S ribosomal protein S15</fullName>
    </alternativeName>
</protein>
<organism>
    <name type="scientific">Nitrosomonas eutropha (strain DSM 101675 / C91 / Nm57)</name>
    <dbReference type="NCBI Taxonomy" id="335283"/>
    <lineage>
        <taxon>Bacteria</taxon>
        <taxon>Pseudomonadati</taxon>
        <taxon>Pseudomonadota</taxon>
        <taxon>Betaproteobacteria</taxon>
        <taxon>Nitrosomonadales</taxon>
        <taxon>Nitrosomonadaceae</taxon>
        <taxon>Nitrosomonas</taxon>
    </lineage>
</organism>
<evidence type="ECO:0000255" key="1">
    <source>
        <dbReference type="HAMAP-Rule" id="MF_01343"/>
    </source>
</evidence>
<evidence type="ECO:0000305" key="2"/>
<accession>Q0AE54</accession>
<proteinExistence type="inferred from homology"/>
<gene>
    <name evidence="1" type="primary">rpsO</name>
    <name type="ordered locus">Neut_2156</name>
</gene>
<keyword id="KW-0687">Ribonucleoprotein</keyword>
<keyword id="KW-0689">Ribosomal protein</keyword>
<keyword id="KW-0694">RNA-binding</keyword>
<keyword id="KW-0699">rRNA-binding</keyword>
<sequence length="89" mass="10428">MAVTTDQKSQVILDYQRVAGDTGSPEVQVAILTTRINSLIDHFKEHVKDHHSRRGLLRMVSRRRKLLDYLKSRNSDNYRILIERLGLRK</sequence>
<name>RS15_NITEC</name>
<dbReference type="EMBL" id="CP000450">
    <property type="protein sequence ID" value="ABI60378.1"/>
    <property type="molecule type" value="Genomic_DNA"/>
</dbReference>
<dbReference type="RefSeq" id="WP_011635175.1">
    <property type="nucleotide sequence ID" value="NC_008344.1"/>
</dbReference>
<dbReference type="SMR" id="Q0AE54"/>
<dbReference type="STRING" id="335283.Neut_2156"/>
<dbReference type="KEGG" id="net:Neut_2156"/>
<dbReference type="eggNOG" id="COG0184">
    <property type="taxonomic scope" value="Bacteria"/>
</dbReference>
<dbReference type="HOGENOM" id="CLU_148518_0_0_4"/>
<dbReference type="OrthoDB" id="9799262at2"/>
<dbReference type="Proteomes" id="UP000001966">
    <property type="component" value="Chromosome"/>
</dbReference>
<dbReference type="GO" id="GO:0022627">
    <property type="term" value="C:cytosolic small ribosomal subunit"/>
    <property type="evidence" value="ECO:0007669"/>
    <property type="project" value="TreeGrafter"/>
</dbReference>
<dbReference type="GO" id="GO:0019843">
    <property type="term" value="F:rRNA binding"/>
    <property type="evidence" value="ECO:0007669"/>
    <property type="project" value="UniProtKB-UniRule"/>
</dbReference>
<dbReference type="GO" id="GO:0003735">
    <property type="term" value="F:structural constituent of ribosome"/>
    <property type="evidence" value="ECO:0007669"/>
    <property type="project" value="InterPro"/>
</dbReference>
<dbReference type="GO" id="GO:0006412">
    <property type="term" value="P:translation"/>
    <property type="evidence" value="ECO:0007669"/>
    <property type="project" value="UniProtKB-UniRule"/>
</dbReference>
<dbReference type="CDD" id="cd00353">
    <property type="entry name" value="Ribosomal_S15p_S13e"/>
    <property type="match status" value="1"/>
</dbReference>
<dbReference type="FunFam" id="1.10.287.10:FF:000002">
    <property type="entry name" value="30S ribosomal protein S15"/>
    <property type="match status" value="1"/>
</dbReference>
<dbReference type="Gene3D" id="6.10.250.3130">
    <property type="match status" value="1"/>
</dbReference>
<dbReference type="Gene3D" id="1.10.287.10">
    <property type="entry name" value="S15/NS1, RNA-binding"/>
    <property type="match status" value="1"/>
</dbReference>
<dbReference type="HAMAP" id="MF_01343_B">
    <property type="entry name" value="Ribosomal_uS15_B"/>
    <property type="match status" value="1"/>
</dbReference>
<dbReference type="InterPro" id="IPR000589">
    <property type="entry name" value="Ribosomal_uS15"/>
</dbReference>
<dbReference type="InterPro" id="IPR005290">
    <property type="entry name" value="Ribosomal_uS15_bac-type"/>
</dbReference>
<dbReference type="InterPro" id="IPR009068">
    <property type="entry name" value="uS15_NS1_RNA-bd_sf"/>
</dbReference>
<dbReference type="NCBIfam" id="TIGR00952">
    <property type="entry name" value="S15_bact"/>
    <property type="match status" value="1"/>
</dbReference>
<dbReference type="PANTHER" id="PTHR23321">
    <property type="entry name" value="RIBOSOMAL PROTEIN S15, BACTERIAL AND ORGANELLAR"/>
    <property type="match status" value="1"/>
</dbReference>
<dbReference type="PANTHER" id="PTHR23321:SF26">
    <property type="entry name" value="SMALL RIBOSOMAL SUBUNIT PROTEIN US15M"/>
    <property type="match status" value="1"/>
</dbReference>
<dbReference type="Pfam" id="PF00312">
    <property type="entry name" value="Ribosomal_S15"/>
    <property type="match status" value="1"/>
</dbReference>
<dbReference type="SMART" id="SM01387">
    <property type="entry name" value="Ribosomal_S15"/>
    <property type="match status" value="1"/>
</dbReference>
<dbReference type="SUPFAM" id="SSF47060">
    <property type="entry name" value="S15/NS1 RNA-binding domain"/>
    <property type="match status" value="1"/>
</dbReference>
<dbReference type="PROSITE" id="PS00362">
    <property type="entry name" value="RIBOSOMAL_S15"/>
    <property type="match status" value="1"/>
</dbReference>